<name>PLSX_VIBPA</name>
<feature type="chain" id="PRO_0000189964" description="Phosphate acyltransferase">
    <location>
        <begin position="1"/>
        <end position="341"/>
    </location>
</feature>
<accession>Q87N19</accession>
<reference key="1">
    <citation type="journal article" date="2003" name="Lancet">
        <title>Genome sequence of Vibrio parahaemolyticus: a pathogenic mechanism distinct from that of V. cholerae.</title>
        <authorList>
            <person name="Makino K."/>
            <person name="Oshima K."/>
            <person name="Kurokawa K."/>
            <person name="Yokoyama K."/>
            <person name="Uda T."/>
            <person name="Tagomori K."/>
            <person name="Iijima Y."/>
            <person name="Najima M."/>
            <person name="Nakano M."/>
            <person name="Yamashita A."/>
            <person name="Kubota Y."/>
            <person name="Kimura S."/>
            <person name="Yasunaga T."/>
            <person name="Honda T."/>
            <person name="Shinagawa H."/>
            <person name="Hattori M."/>
            <person name="Iida T."/>
        </authorList>
    </citation>
    <scope>NUCLEOTIDE SEQUENCE [LARGE SCALE GENOMIC DNA]</scope>
    <source>
        <strain>RIMD 2210633</strain>
    </source>
</reference>
<proteinExistence type="inferred from homology"/>
<organism>
    <name type="scientific">Vibrio parahaemolyticus serotype O3:K6 (strain RIMD 2210633)</name>
    <dbReference type="NCBI Taxonomy" id="223926"/>
    <lineage>
        <taxon>Bacteria</taxon>
        <taxon>Pseudomonadati</taxon>
        <taxon>Pseudomonadota</taxon>
        <taxon>Gammaproteobacteria</taxon>
        <taxon>Vibrionales</taxon>
        <taxon>Vibrionaceae</taxon>
        <taxon>Vibrio</taxon>
    </lineage>
</organism>
<keyword id="KW-0963">Cytoplasm</keyword>
<keyword id="KW-0444">Lipid biosynthesis</keyword>
<keyword id="KW-0443">Lipid metabolism</keyword>
<keyword id="KW-0594">Phospholipid biosynthesis</keyword>
<keyword id="KW-1208">Phospholipid metabolism</keyword>
<keyword id="KW-0808">Transferase</keyword>
<evidence type="ECO:0000255" key="1">
    <source>
        <dbReference type="HAMAP-Rule" id="MF_00019"/>
    </source>
</evidence>
<gene>
    <name evidence="1" type="primary">plsX</name>
    <name type="ordered locus">VP2057</name>
</gene>
<comment type="function">
    <text evidence="1">Catalyzes the reversible formation of acyl-phosphate (acyl-PO(4)) from acyl-[acyl-carrier-protein] (acyl-ACP). This enzyme utilizes acyl-ACP as fatty acyl donor, but not acyl-CoA.</text>
</comment>
<comment type="catalytic activity">
    <reaction evidence="1">
        <text>a fatty acyl-[ACP] + phosphate = an acyl phosphate + holo-[ACP]</text>
        <dbReference type="Rhea" id="RHEA:42292"/>
        <dbReference type="Rhea" id="RHEA-COMP:9685"/>
        <dbReference type="Rhea" id="RHEA-COMP:14125"/>
        <dbReference type="ChEBI" id="CHEBI:43474"/>
        <dbReference type="ChEBI" id="CHEBI:59918"/>
        <dbReference type="ChEBI" id="CHEBI:64479"/>
        <dbReference type="ChEBI" id="CHEBI:138651"/>
        <dbReference type="EC" id="2.3.1.274"/>
    </reaction>
</comment>
<comment type="pathway">
    <text evidence="1">Lipid metabolism; phospholipid metabolism.</text>
</comment>
<comment type="subunit">
    <text evidence="1">Homodimer. Probably interacts with PlsY.</text>
</comment>
<comment type="subcellular location">
    <subcellularLocation>
        <location evidence="1">Cytoplasm</location>
    </subcellularLocation>
    <text evidence="1">Associated with the membrane possibly through PlsY.</text>
</comment>
<comment type="similarity">
    <text evidence="1">Belongs to the PlsX family.</text>
</comment>
<protein>
    <recommendedName>
        <fullName evidence="1">Phosphate acyltransferase</fullName>
        <ecNumber evidence="1">2.3.1.274</ecNumber>
    </recommendedName>
    <alternativeName>
        <fullName evidence="1">Acyl-ACP phosphotransacylase</fullName>
    </alternativeName>
    <alternativeName>
        <fullName evidence="1">Acyl-[acyl-carrier-protein]--phosphate acyltransferase</fullName>
    </alternativeName>
    <alternativeName>
        <fullName evidence="1">Phosphate-acyl-ACP acyltransferase</fullName>
    </alternativeName>
</protein>
<dbReference type="EC" id="2.3.1.274" evidence="1"/>
<dbReference type="EMBL" id="BA000031">
    <property type="protein sequence ID" value="BAC60320.1"/>
    <property type="molecule type" value="Genomic_DNA"/>
</dbReference>
<dbReference type="RefSeq" id="NP_798436.1">
    <property type="nucleotide sequence ID" value="NC_004603.1"/>
</dbReference>
<dbReference type="RefSeq" id="WP_005490633.1">
    <property type="nucleotide sequence ID" value="NC_004603.1"/>
</dbReference>
<dbReference type="SMR" id="Q87N19"/>
<dbReference type="GeneID" id="1189568"/>
<dbReference type="KEGG" id="vpa:VP2057"/>
<dbReference type="PATRIC" id="fig|223926.6.peg.1967"/>
<dbReference type="eggNOG" id="COG0416">
    <property type="taxonomic scope" value="Bacteria"/>
</dbReference>
<dbReference type="HOGENOM" id="CLU_039379_1_0_6"/>
<dbReference type="UniPathway" id="UPA00085"/>
<dbReference type="Proteomes" id="UP000002493">
    <property type="component" value="Chromosome 1"/>
</dbReference>
<dbReference type="GO" id="GO:0005737">
    <property type="term" value="C:cytoplasm"/>
    <property type="evidence" value="ECO:0007669"/>
    <property type="project" value="UniProtKB-SubCell"/>
</dbReference>
<dbReference type="GO" id="GO:0043811">
    <property type="term" value="F:phosphate:acyl-[acyl carrier protein] acyltransferase activity"/>
    <property type="evidence" value="ECO:0007669"/>
    <property type="project" value="UniProtKB-UniRule"/>
</dbReference>
<dbReference type="GO" id="GO:0006633">
    <property type="term" value="P:fatty acid biosynthetic process"/>
    <property type="evidence" value="ECO:0007669"/>
    <property type="project" value="UniProtKB-UniRule"/>
</dbReference>
<dbReference type="GO" id="GO:0008654">
    <property type="term" value="P:phospholipid biosynthetic process"/>
    <property type="evidence" value="ECO:0007669"/>
    <property type="project" value="UniProtKB-KW"/>
</dbReference>
<dbReference type="Gene3D" id="3.40.718.10">
    <property type="entry name" value="Isopropylmalate Dehydrogenase"/>
    <property type="match status" value="1"/>
</dbReference>
<dbReference type="HAMAP" id="MF_00019">
    <property type="entry name" value="PlsX"/>
    <property type="match status" value="1"/>
</dbReference>
<dbReference type="InterPro" id="IPR003664">
    <property type="entry name" value="FA_synthesis"/>
</dbReference>
<dbReference type="InterPro" id="IPR012281">
    <property type="entry name" value="Phospholipid_synth_PlsX-like"/>
</dbReference>
<dbReference type="NCBIfam" id="TIGR00182">
    <property type="entry name" value="plsX"/>
    <property type="match status" value="1"/>
</dbReference>
<dbReference type="PANTHER" id="PTHR30100">
    <property type="entry name" value="FATTY ACID/PHOSPHOLIPID SYNTHESIS PROTEIN PLSX"/>
    <property type="match status" value="1"/>
</dbReference>
<dbReference type="PANTHER" id="PTHR30100:SF1">
    <property type="entry name" value="PHOSPHATE ACYLTRANSFERASE"/>
    <property type="match status" value="1"/>
</dbReference>
<dbReference type="Pfam" id="PF02504">
    <property type="entry name" value="FA_synthesis"/>
    <property type="match status" value="1"/>
</dbReference>
<dbReference type="PIRSF" id="PIRSF002465">
    <property type="entry name" value="Phsphlp_syn_PlsX"/>
    <property type="match status" value="1"/>
</dbReference>
<dbReference type="SUPFAM" id="SSF53659">
    <property type="entry name" value="Isocitrate/Isopropylmalate dehydrogenase-like"/>
    <property type="match status" value="1"/>
</dbReference>
<sequence length="341" mass="36612">MQSITVALDAMGGDFGPRVTVPAAVQALSHFPELKVILIGDQSLITSQLSQLGTSTSSRLTILHSEKVISNSEKPSLALRNSQNSSMRMAIDLVSDQEADACVSGGNTGALMALSRFILKLLPGIERPALVSALPTISGKRTWMLDLGANVSCDADSLFQFAVMGSALAEEHLCRPPRVAVLNIGAEEIKGNDLVKRCAEMLSQTDAINFVGYIEGNQILHDVADVIVCDGFVGNVCLKASEGTAQLFIEKLKTSMMASTIKGWIARKLFSRLFNELKTLNPDQYNGASLLGLRGIVIKSHGSADVSAIVNALGEAVHEVKRQVPSRISDRLEAVLLERHY</sequence>